<accession>Q9FWU1</accession>
<accession>A3C5Z9</accession>
<accession>Q109H3</accession>
<accession>Q7XD56</accession>
<proteinExistence type="inferred from homology"/>
<sequence>MAANVKVLVVLALLQLMSLHAVVHGGDNGGVSAVATGKHEPKPKQGGGGGGGDGGCHISGFLHGKAGKCNRAHGSDCCVTGRRYPQFRCSPPVSSARPTPATLTLNSFARGGDGGGRSSCDGRFHPDTAMVVALSSGWLRLDGASRCNRMIRVAAGNGRSALARVVDECDSVNGCDAEHNFEPPCPNDVVDGSPAVWKALGLDEGVGEFKVTWSDV</sequence>
<keyword id="KW-1185">Reference proteome</keyword>
<keyword id="KW-0964">Secreted</keyword>
<keyword id="KW-0732">Signal</keyword>
<dbReference type="EMBL" id="AC023240">
    <property type="protein sequence ID" value="AAG13534.1"/>
    <property type="status" value="ALT_SEQ"/>
    <property type="molecule type" value="Genomic_DNA"/>
</dbReference>
<dbReference type="EMBL" id="DP000086">
    <property type="protein sequence ID" value="ABG66162.1"/>
    <property type="molecule type" value="Genomic_DNA"/>
</dbReference>
<dbReference type="EMBL" id="AP014966">
    <property type="protein sequence ID" value="BAT11425.1"/>
    <property type="molecule type" value="Genomic_DNA"/>
</dbReference>
<dbReference type="EMBL" id="CM000147">
    <property type="protein sequence ID" value="EAZ16512.1"/>
    <property type="molecule type" value="Genomic_DNA"/>
</dbReference>
<dbReference type="SMR" id="Q9FWU1"/>
<dbReference type="FunCoup" id="Q9FWU1">
    <property type="interactions" value="4"/>
</dbReference>
<dbReference type="PaxDb" id="39947-Q9FWU1"/>
<dbReference type="EnsemblPlants" id="Os10t0490666-00">
    <property type="protein sequence ID" value="Os10t0490666-00"/>
    <property type="gene ID" value="Os10g0490666"/>
</dbReference>
<dbReference type="GeneID" id="107277335"/>
<dbReference type="Gramene" id="Os10t0490666-00">
    <property type="protein sequence ID" value="Os10t0490666-00"/>
    <property type="gene ID" value="Os10g0490666"/>
</dbReference>
<dbReference type="KEGG" id="osa:107277335"/>
<dbReference type="eggNOG" id="ENOG502RXVH">
    <property type="taxonomic scope" value="Eukaryota"/>
</dbReference>
<dbReference type="HOGENOM" id="CLU_047639_4_2_1"/>
<dbReference type="InParanoid" id="Q9FWU1"/>
<dbReference type="OMA" id="MANTIPI"/>
<dbReference type="OrthoDB" id="406505at2759"/>
<dbReference type="Proteomes" id="UP000000763">
    <property type="component" value="Chromosome 10"/>
</dbReference>
<dbReference type="Proteomes" id="UP000007752">
    <property type="component" value="Chromosome 10"/>
</dbReference>
<dbReference type="Proteomes" id="UP000059680">
    <property type="component" value="Chromosome 10"/>
</dbReference>
<dbReference type="GO" id="GO:0005576">
    <property type="term" value="C:extracellular region"/>
    <property type="evidence" value="ECO:0007669"/>
    <property type="project" value="UniProtKB-SubCell"/>
</dbReference>
<dbReference type="CDD" id="cd22270">
    <property type="entry name" value="DPBB_kiwellin-like"/>
    <property type="match status" value="1"/>
</dbReference>
<dbReference type="Gene3D" id="2.40.40.10">
    <property type="entry name" value="RlpA-like domain"/>
    <property type="match status" value="1"/>
</dbReference>
<dbReference type="InterPro" id="IPR039271">
    <property type="entry name" value="Kiwellin-like"/>
</dbReference>
<dbReference type="InterPro" id="IPR036908">
    <property type="entry name" value="RlpA-like_sf"/>
</dbReference>
<dbReference type="PANTHER" id="PTHR33191">
    <property type="entry name" value="RIPENING-RELATED PROTEIN 2-RELATED"/>
    <property type="match status" value="1"/>
</dbReference>
<dbReference type="PANTHER" id="PTHR33191:SF71">
    <property type="entry name" value="RIPENING-RELATED PROTEIN 4-RELATED"/>
    <property type="match status" value="1"/>
</dbReference>
<dbReference type="Pfam" id="PF24300">
    <property type="entry name" value="KWL1"/>
    <property type="match status" value="1"/>
</dbReference>
<dbReference type="SUPFAM" id="SSF50685">
    <property type="entry name" value="Barwin-like endoglucanases"/>
    <property type="match status" value="1"/>
</dbReference>
<gene>
    <name type="ordered locus">Os10g0490666</name>
    <name type="ordered locus">Os10g0490600</name>
    <name type="ordered locus">LOC_Os10g34902</name>
    <name evidence="3" type="ORF">OsJ_31984</name>
    <name type="ORF">OSJNBa0051D19.14</name>
</gene>
<reference key="1">
    <citation type="journal article" date="2003" name="Science">
        <title>In-depth view of structure, activity, and evolution of rice chromosome 10.</title>
        <authorList>
            <person name="Yu Y."/>
            <person name="Rambo T."/>
            <person name="Currie J."/>
            <person name="Saski C."/>
            <person name="Kim H.-R."/>
            <person name="Collura K."/>
            <person name="Thompson S."/>
            <person name="Simmons J."/>
            <person name="Yang T.-J."/>
            <person name="Nah G."/>
            <person name="Patel A.J."/>
            <person name="Thurmond S."/>
            <person name="Henry D."/>
            <person name="Oates R."/>
            <person name="Palmer M."/>
            <person name="Pries G."/>
            <person name="Gibson J."/>
            <person name="Anderson H."/>
            <person name="Paradkar M."/>
            <person name="Crane L."/>
            <person name="Dale J."/>
            <person name="Carver M.B."/>
            <person name="Wood T."/>
            <person name="Frisch D."/>
            <person name="Engler F."/>
            <person name="Soderlund C."/>
            <person name="Palmer L.E."/>
            <person name="Teytelman L."/>
            <person name="Nascimento L."/>
            <person name="De la Bastide M."/>
            <person name="Spiegel L."/>
            <person name="Ware D."/>
            <person name="O'Shaughnessy A."/>
            <person name="Dike S."/>
            <person name="Dedhia N."/>
            <person name="Preston R."/>
            <person name="Huang E."/>
            <person name="Ferraro K."/>
            <person name="Kuit K."/>
            <person name="Miller B."/>
            <person name="Zutavern T."/>
            <person name="Katzenberger F."/>
            <person name="Muller S."/>
            <person name="Balija V."/>
            <person name="Martienssen R.A."/>
            <person name="Stein L."/>
            <person name="Minx P."/>
            <person name="Johnson D."/>
            <person name="Cordum H."/>
            <person name="Mardis E."/>
            <person name="Cheng Z."/>
            <person name="Jiang J."/>
            <person name="Wilson R."/>
            <person name="McCombie W.R."/>
            <person name="Wing R.A."/>
            <person name="Yuan Q."/>
            <person name="Ouyang S."/>
            <person name="Liu J."/>
            <person name="Jones K.M."/>
            <person name="Gansberger K."/>
            <person name="Moffat K."/>
            <person name="Hill J."/>
            <person name="Tsitrin T."/>
            <person name="Overton L."/>
            <person name="Bera J."/>
            <person name="Kim M."/>
            <person name="Jin S."/>
            <person name="Tallon L."/>
            <person name="Ciecko A."/>
            <person name="Pai G."/>
            <person name="Van Aken S."/>
            <person name="Utterback T."/>
            <person name="Reidmuller S."/>
            <person name="Bormann J."/>
            <person name="Feldblyum T."/>
            <person name="Hsiao J."/>
            <person name="Zismann V."/>
            <person name="Blunt S."/>
            <person name="de Vazeille A.R."/>
            <person name="Shaffer T."/>
            <person name="Koo H."/>
            <person name="Suh B."/>
            <person name="Yang Q."/>
            <person name="Haas B."/>
            <person name="Peterson J."/>
            <person name="Pertea M."/>
            <person name="Volfovsky N."/>
            <person name="Wortman J."/>
            <person name="White O."/>
            <person name="Salzberg S.L."/>
            <person name="Fraser C.M."/>
            <person name="Buell C.R."/>
            <person name="Messing J."/>
            <person name="Song R."/>
            <person name="Fuks G."/>
            <person name="Llaca V."/>
            <person name="Kovchak S."/>
            <person name="Young S."/>
            <person name="Bowers J.E."/>
            <person name="Paterson A.H."/>
            <person name="Johns M.A."/>
            <person name="Mao L."/>
            <person name="Pan H."/>
            <person name="Dean R.A."/>
        </authorList>
    </citation>
    <scope>NUCLEOTIDE SEQUENCE [LARGE SCALE GENOMIC DNA]</scope>
    <source>
        <strain>cv. Nipponbare</strain>
    </source>
</reference>
<reference key="2">
    <citation type="journal article" date="2005" name="Nature">
        <title>The map-based sequence of the rice genome.</title>
        <authorList>
            <consortium name="International rice genome sequencing project (IRGSP)"/>
        </authorList>
    </citation>
    <scope>NUCLEOTIDE SEQUENCE [LARGE SCALE GENOMIC DNA]</scope>
    <source>
        <strain>cv. Nipponbare</strain>
    </source>
</reference>
<reference key="3">
    <citation type="journal article" date="2013" name="Rice">
        <title>Improvement of the Oryza sativa Nipponbare reference genome using next generation sequence and optical map data.</title>
        <authorList>
            <person name="Kawahara Y."/>
            <person name="de la Bastide M."/>
            <person name="Hamilton J.P."/>
            <person name="Kanamori H."/>
            <person name="McCombie W.R."/>
            <person name="Ouyang S."/>
            <person name="Schwartz D.C."/>
            <person name="Tanaka T."/>
            <person name="Wu J."/>
            <person name="Zhou S."/>
            <person name="Childs K.L."/>
            <person name="Davidson R.M."/>
            <person name="Lin H."/>
            <person name="Quesada-Ocampo L."/>
            <person name="Vaillancourt B."/>
            <person name="Sakai H."/>
            <person name="Lee S.S."/>
            <person name="Kim J."/>
            <person name="Numa H."/>
            <person name="Itoh T."/>
            <person name="Buell C.R."/>
            <person name="Matsumoto T."/>
        </authorList>
    </citation>
    <scope>GENOME REANNOTATION</scope>
    <source>
        <strain>cv. Nipponbare</strain>
    </source>
</reference>
<reference key="4">
    <citation type="journal article" date="2005" name="PLoS Biol.">
        <title>The genomes of Oryza sativa: a history of duplications.</title>
        <authorList>
            <person name="Yu J."/>
            <person name="Wang J."/>
            <person name="Lin W."/>
            <person name="Li S."/>
            <person name="Li H."/>
            <person name="Zhou J."/>
            <person name="Ni P."/>
            <person name="Dong W."/>
            <person name="Hu S."/>
            <person name="Zeng C."/>
            <person name="Zhang J."/>
            <person name="Zhang Y."/>
            <person name="Li R."/>
            <person name="Xu Z."/>
            <person name="Li S."/>
            <person name="Li X."/>
            <person name="Zheng H."/>
            <person name="Cong L."/>
            <person name="Lin L."/>
            <person name="Yin J."/>
            <person name="Geng J."/>
            <person name="Li G."/>
            <person name="Shi J."/>
            <person name="Liu J."/>
            <person name="Lv H."/>
            <person name="Li J."/>
            <person name="Wang J."/>
            <person name="Deng Y."/>
            <person name="Ran L."/>
            <person name="Shi X."/>
            <person name="Wang X."/>
            <person name="Wu Q."/>
            <person name="Li C."/>
            <person name="Ren X."/>
            <person name="Wang J."/>
            <person name="Wang X."/>
            <person name="Li D."/>
            <person name="Liu D."/>
            <person name="Zhang X."/>
            <person name="Ji Z."/>
            <person name="Zhao W."/>
            <person name="Sun Y."/>
            <person name="Zhang Z."/>
            <person name="Bao J."/>
            <person name="Han Y."/>
            <person name="Dong L."/>
            <person name="Ji J."/>
            <person name="Chen P."/>
            <person name="Wu S."/>
            <person name="Liu J."/>
            <person name="Xiao Y."/>
            <person name="Bu D."/>
            <person name="Tan J."/>
            <person name="Yang L."/>
            <person name="Ye C."/>
            <person name="Zhang J."/>
            <person name="Xu J."/>
            <person name="Zhou Y."/>
            <person name="Yu Y."/>
            <person name="Zhang B."/>
            <person name="Zhuang S."/>
            <person name="Wei H."/>
            <person name="Liu B."/>
            <person name="Lei M."/>
            <person name="Yu H."/>
            <person name="Li Y."/>
            <person name="Xu H."/>
            <person name="Wei S."/>
            <person name="He X."/>
            <person name="Fang L."/>
            <person name="Zhang Z."/>
            <person name="Zhang Y."/>
            <person name="Huang X."/>
            <person name="Su Z."/>
            <person name="Tong W."/>
            <person name="Li J."/>
            <person name="Tong Z."/>
            <person name="Li S."/>
            <person name="Ye J."/>
            <person name="Wang L."/>
            <person name="Fang L."/>
            <person name="Lei T."/>
            <person name="Chen C.-S."/>
            <person name="Chen H.-C."/>
            <person name="Xu Z."/>
            <person name="Li H."/>
            <person name="Huang H."/>
            <person name="Zhang F."/>
            <person name="Xu H."/>
            <person name="Li N."/>
            <person name="Zhao C."/>
            <person name="Li S."/>
            <person name="Dong L."/>
            <person name="Huang Y."/>
            <person name="Li L."/>
            <person name="Xi Y."/>
            <person name="Qi Q."/>
            <person name="Li W."/>
            <person name="Zhang B."/>
            <person name="Hu W."/>
            <person name="Zhang Y."/>
            <person name="Tian X."/>
            <person name="Jiao Y."/>
            <person name="Liang X."/>
            <person name="Jin J."/>
            <person name="Gao L."/>
            <person name="Zheng W."/>
            <person name="Hao B."/>
            <person name="Liu S.-M."/>
            <person name="Wang W."/>
            <person name="Yuan L."/>
            <person name="Cao M."/>
            <person name="McDermott J."/>
            <person name="Samudrala R."/>
            <person name="Wang J."/>
            <person name="Wong G.K.-S."/>
            <person name="Yang H."/>
        </authorList>
    </citation>
    <scope>NUCLEOTIDE SEQUENCE [LARGE SCALE GENOMIC DNA]</scope>
    <source>
        <strain>cv. Nipponbare</strain>
    </source>
</reference>
<organism>
    <name type="scientific">Oryza sativa subsp. japonica</name>
    <name type="common">Rice</name>
    <dbReference type="NCBI Taxonomy" id="39947"/>
    <lineage>
        <taxon>Eukaryota</taxon>
        <taxon>Viridiplantae</taxon>
        <taxon>Streptophyta</taxon>
        <taxon>Embryophyta</taxon>
        <taxon>Tracheophyta</taxon>
        <taxon>Spermatophyta</taxon>
        <taxon>Magnoliopsida</taxon>
        <taxon>Liliopsida</taxon>
        <taxon>Poales</taxon>
        <taxon>Poaceae</taxon>
        <taxon>BOP clade</taxon>
        <taxon>Oryzoideae</taxon>
        <taxon>Oryzeae</taxon>
        <taxon>Oryzinae</taxon>
        <taxon>Oryza</taxon>
        <taxon>Oryza sativa</taxon>
    </lineage>
</organism>
<comment type="subcellular location">
    <subcellularLocation>
        <location evidence="2">Secreted</location>
    </subcellularLocation>
</comment>
<comment type="similarity">
    <text evidence="2">Belongs to the kiwellin family.</text>
</comment>
<comment type="sequence caution" evidence="2">
    <conflict type="erroneous gene model prediction">
        <sequence resource="EMBL-CDS" id="AAG13534"/>
    </conflict>
</comment>
<evidence type="ECO:0000255" key="1"/>
<evidence type="ECO:0000305" key="2"/>
<evidence type="ECO:0000312" key="3">
    <source>
        <dbReference type="EMBL" id="EAZ16512.1"/>
    </source>
</evidence>
<protein>
    <recommendedName>
        <fullName>Putative ripening-related protein 4</fullName>
    </recommendedName>
</protein>
<feature type="signal peptide" evidence="1">
    <location>
        <begin position="1"/>
        <end position="25"/>
    </location>
</feature>
<feature type="chain" id="PRO_0000045971" description="Putative ripening-related protein 4">
    <location>
        <begin position="26"/>
        <end position="216"/>
    </location>
</feature>
<name>RIP4_ORYSJ</name>